<gene>
    <name evidence="1" type="primary">matK</name>
</gene>
<comment type="function">
    <text evidence="1">Usually encoded in the trnK tRNA gene intron. Probably assists in splicing its own and other chloroplast group II introns.</text>
</comment>
<comment type="subcellular location">
    <subcellularLocation>
        <location>Plastid</location>
        <location>Chloroplast</location>
    </subcellularLocation>
</comment>
<comment type="similarity">
    <text evidence="1">Belongs to the intron maturase 2 family. MatK subfamily.</text>
</comment>
<name>MATK_FROFL</name>
<reference key="1">
    <citation type="journal article" date="2005" name="Ann. Mo. Bot. Gard.">
        <title>Phylogenetics of Amaranthaceae based on matK/trnK sequence data -- evidence from parsimony, likelihood, and Bayesian analyses.</title>
        <authorList>
            <person name="Mueller K.F."/>
            <person name="Borsch T."/>
        </authorList>
    </citation>
    <scope>NUCLEOTIDE SEQUENCE [GENOMIC DNA]</scope>
</reference>
<keyword id="KW-0150">Chloroplast</keyword>
<keyword id="KW-0507">mRNA processing</keyword>
<keyword id="KW-0934">Plastid</keyword>
<keyword id="KW-0694">RNA-binding</keyword>
<keyword id="KW-0819">tRNA processing</keyword>
<feature type="chain" id="PRO_0000143392" description="Maturase K">
    <location>
        <begin position="1"/>
        <end position="505"/>
    </location>
</feature>
<evidence type="ECO:0000255" key="1">
    <source>
        <dbReference type="HAMAP-Rule" id="MF_01390"/>
    </source>
</evidence>
<sequence length="505" mass="60335">MEEFQGHRELYRSWQHNFFYPLIFQEYIYTFAYDRGLNKLILLENVVDQRYSLLTVKRLITRLYHQNHLILSVNDSNQNEIFGHKPKKNLYSQMITEGFAVIVEIPFSLLLISSLDGKEKKIGKSTNLQSIHSIFPFLEDKFLYLNYVLDILIPYPTHLEILVQTLRYWLKDASSLHLLRFFLYECRNWTSRITSKESISFLKKRNRRLFLFLYNFYVCEYEYFFVSLRNQSSYLRSTSFGALLERIHFYGKFKYLVKVKDFAVILWFFKEPFPHYVRYQGKALLASKGTSLLMHKWKYYFIYFWQCYFSVWSQPRRIYINQLSNYSLDFMGFLSNVRFNSSVIRSQMLENSFLLENIRKKFDTIVPISPLVGSLAKAKFCNVLGHPIGKSVWTDLSDSDIIDRFGRICRNLSHYYSGSSRKKNLYRIKYILRLSCARTLSRKHKSTVRAFLKRLGSEFLEEFFTEEEKVLSLILPRDSSTSGGLYRGRVWYLDIICIHNLVNDQ</sequence>
<proteinExistence type="inferred from homology"/>
<accession>Q5J309</accession>
<dbReference type="EMBL" id="AY514799">
    <property type="protein sequence ID" value="AAT28229.1"/>
    <property type="molecule type" value="Genomic_DNA"/>
</dbReference>
<dbReference type="GO" id="GO:0009507">
    <property type="term" value="C:chloroplast"/>
    <property type="evidence" value="ECO:0007669"/>
    <property type="project" value="UniProtKB-SubCell"/>
</dbReference>
<dbReference type="GO" id="GO:0003723">
    <property type="term" value="F:RNA binding"/>
    <property type="evidence" value="ECO:0007669"/>
    <property type="project" value="UniProtKB-KW"/>
</dbReference>
<dbReference type="GO" id="GO:0006397">
    <property type="term" value="P:mRNA processing"/>
    <property type="evidence" value="ECO:0007669"/>
    <property type="project" value="UniProtKB-KW"/>
</dbReference>
<dbReference type="GO" id="GO:0008380">
    <property type="term" value="P:RNA splicing"/>
    <property type="evidence" value="ECO:0007669"/>
    <property type="project" value="UniProtKB-UniRule"/>
</dbReference>
<dbReference type="GO" id="GO:0008033">
    <property type="term" value="P:tRNA processing"/>
    <property type="evidence" value="ECO:0007669"/>
    <property type="project" value="UniProtKB-KW"/>
</dbReference>
<dbReference type="HAMAP" id="MF_01390">
    <property type="entry name" value="MatK"/>
    <property type="match status" value="1"/>
</dbReference>
<dbReference type="InterPro" id="IPR024937">
    <property type="entry name" value="Domain_X"/>
</dbReference>
<dbReference type="InterPro" id="IPR002866">
    <property type="entry name" value="Maturase_MatK"/>
</dbReference>
<dbReference type="InterPro" id="IPR024942">
    <property type="entry name" value="Maturase_MatK_N"/>
</dbReference>
<dbReference type="PANTHER" id="PTHR34811">
    <property type="entry name" value="MATURASE K"/>
    <property type="match status" value="1"/>
</dbReference>
<dbReference type="PANTHER" id="PTHR34811:SF1">
    <property type="entry name" value="MATURASE K"/>
    <property type="match status" value="1"/>
</dbReference>
<dbReference type="Pfam" id="PF01348">
    <property type="entry name" value="Intron_maturas2"/>
    <property type="match status" value="1"/>
</dbReference>
<dbReference type="Pfam" id="PF01824">
    <property type="entry name" value="MatK_N"/>
    <property type="match status" value="1"/>
</dbReference>
<protein>
    <recommendedName>
        <fullName evidence="1">Maturase K</fullName>
    </recommendedName>
    <alternativeName>
        <fullName evidence="1">Intron maturase</fullName>
    </alternativeName>
</protein>
<organism>
    <name type="scientific">Froelichia floridana</name>
    <name type="common">Florida snake-cotton</name>
    <name type="synonym">Oplotheca floridana</name>
    <dbReference type="NCBI Taxonomy" id="46114"/>
    <lineage>
        <taxon>Eukaryota</taxon>
        <taxon>Viridiplantae</taxon>
        <taxon>Streptophyta</taxon>
        <taxon>Embryophyta</taxon>
        <taxon>Tracheophyta</taxon>
        <taxon>Spermatophyta</taxon>
        <taxon>Magnoliopsida</taxon>
        <taxon>eudicotyledons</taxon>
        <taxon>Gunneridae</taxon>
        <taxon>Pentapetalae</taxon>
        <taxon>Caryophyllales</taxon>
        <taxon>Amaranthaceae</taxon>
        <taxon>Froelichia</taxon>
    </lineage>
</organism>
<geneLocation type="chloroplast"/>